<dbReference type="EMBL" id="U11252">
    <property type="protein sequence ID" value="AAA19776.1"/>
    <property type="molecule type" value="Unassigned_DNA"/>
</dbReference>
<dbReference type="EMBL" id="AM286415">
    <property type="protein sequence ID" value="CAL13940.1"/>
    <property type="molecule type" value="Genomic_DNA"/>
</dbReference>
<dbReference type="RefSeq" id="WP_005159841.1">
    <property type="nucleotide sequence ID" value="NC_008800.1"/>
</dbReference>
<dbReference type="RefSeq" id="YP_001008066.1">
    <property type="nucleotide sequence ID" value="NC_008800.1"/>
</dbReference>
<dbReference type="SMR" id="A1JS44"/>
<dbReference type="GeneID" id="97454233"/>
<dbReference type="KEGG" id="yen:YE3921"/>
<dbReference type="PATRIC" id="fig|393305.7.peg.4171"/>
<dbReference type="eggNOG" id="COG0089">
    <property type="taxonomic scope" value="Bacteria"/>
</dbReference>
<dbReference type="HOGENOM" id="CLU_037562_3_1_6"/>
<dbReference type="OrthoDB" id="9793353at2"/>
<dbReference type="Proteomes" id="UP000000642">
    <property type="component" value="Chromosome"/>
</dbReference>
<dbReference type="GO" id="GO:1990904">
    <property type="term" value="C:ribonucleoprotein complex"/>
    <property type="evidence" value="ECO:0007669"/>
    <property type="project" value="UniProtKB-KW"/>
</dbReference>
<dbReference type="GO" id="GO:0005840">
    <property type="term" value="C:ribosome"/>
    <property type="evidence" value="ECO:0007669"/>
    <property type="project" value="UniProtKB-KW"/>
</dbReference>
<dbReference type="GO" id="GO:0019843">
    <property type="term" value="F:rRNA binding"/>
    <property type="evidence" value="ECO:0007669"/>
    <property type="project" value="UniProtKB-UniRule"/>
</dbReference>
<dbReference type="GO" id="GO:0003735">
    <property type="term" value="F:structural constituent of ribosome"/>
    <property type="evidence" value="ECO:0007669"/>
    <property type="project" value="InterPro"/>
</dbReference>
<dbReference type="GO" id="GO:0006412">
    <property type="term" value="P:translation"/>
    <property type="evidence" value="ECO:0007669"/>
    <property type="project" value="UniProtKB-UniRule"/>
</dbReference>
<dbReference type="FunFam" id="3.30.70.330:FF:000001">
    <property type="entry name" value="50S ribosomal protein L23"/>
    <property type="match status" value="1"/>
</dbReference>
<dbReference type="Gene3D" id="3.30.70.330">
    <property type="match status" value="1"/>
</dbReference>
<dbReference type="HAMAP" id="MF_01369_B">
    <property type="entry name" value="Ribosomal_uL23_B"/>
    <property type="match status" value="1"/>
</dbReference>
<dbReference type="InterPro" id="IPR012677">
    <property type="entry name" value="Nucleotide-bd_a/b_plait_sf"/>
</dbReference>
<dbReference type="InterPro" id="IPR013025">
    <property type="entry name" value="Ribosomal_uL23-like"/>
</dbReference>
<dbReference type="InterPro" id="IPR012678">
    <property type="entry name" value="Ribosomal_uL23/eL15/eS24_sf"/>
</dbReference>
<dbReference type="InterPro" id="IPR001014">
    <property type="entry name" value="Ribosomal_uL23_CS"/>
</dbReference>
<dbReference type="NCBIfam" id="NF004358">
    <property type="entry name" value="PRK05738.1-1"/>
    <property type="match status" value="1"/>
</dbReference>
<dbReference type="NCBIfam" id="NF004359">
    <property type="entry name" value="PRK05738.1-3"/>
    <property type="match status" value="1"/>
</dbReference>
<dbReference type="NCBIfam" id="NF004363">
    <property type="entry name" value="PRK05738.2-4"/>
    <property type="match status" value="1"/>
</dbReference>
<dbReference type="NCBIfam" id="NF004366">
    <property type="entry name" value="PRK05738.3-2"/>
    <property type="match status" value="1"/>
</dbReference>
<dbReference type="PANTHER" id="PTHR11620">
    <property type="entry name" value="60S RIBOSOMAL PROTEIN L23A"/>
    <property type="match status" value="1"/>
</dbReference>
<dbReference type="Pfam" id="PF00276">
    <property type="entry name" value="Ribosomal_L23"/>
    <property type="match status" value="1"/>
</dbReference>
<dbReference type="SUPFAM" id="SSF54189">
    <property type="entry name" value="Ribosomal proteins S24e, L23 and L15e"/>
    <property type="match status" value="1"/>
</dbReference>
<dbReference type="PROSITE" id="PS00050">
    <property type="entry name" value="RIBOSOMAL_L23"/>
    <property type="match status" value="1"/>
</dbReference>
<protein>
    <recommendedName>
        <fullName evidence="1">Large ribosomal subunit protein uL23</fullName>
    </recommendedName>
    <alternativeName>
        <fullName evidence="2">50S ribosomal protein L23</fullName>
    </alternativeName>
</protein>
<reference key="1">
    <citation type="submission" date="1994-06" db="EMBL/GenBank/DDBJ databases">
        <title>Nucleotide sequence of the Yersinia enterocolitica 8081 (serotype 0:8) ribosomal protein L23 gene (rplW).</title>
        <authorList>
            <person name="Skurnik M."/>
        </authorList>
    </citation>
    <scope>NUCLEOTIDE SEQUENCE [GENOMIC DNA]</scope>
</reference>
<reference key="2">
    <citation type="journal article" date="2006" name="PLoS Genet.">
        <title>The complete genome sequence and comparative genome analysis of the high pathogenicity Yersinia enterocolitica strain 8081.</title>
        <authorList>
            <person name="Thomson N.R."/>
            <person name="Howard S."/>
            <person name="Wren B.W."/>
            <person name="Holden M.T.G."/>
            <person name="Crossman L."/>
            <person name="Challis G.L."/>
            <person name="Churcher C."/>
            <person name="Mungall K."/>
            <person name="Brooks K."/>
            <person name="Chillingworth T."/>
            <person name="Feltwell T."/>
            <person name="Abdellah Z."/>
            <person name="Hauser H."/>
            <person name="Jagels K."/>
            <person name="Maddison M."/>
            <person name="Moule S."/>
            <person name="Sanders M."/>
            <person name="Whitehead S."/>
            <person name="Quail M.A."/>
            <person name="Dougan G."/>
            <person name="Parkhill J."/>
            <person name="Prentice M.B."/>
        </authorList>
    </citation>
    <scope>NUCLEOTIDE SEQUENCE [LARGE SCALE GENOMIC DNA]</scope>
    <source>
        <strain>NCTC 13174 / 8081</strain>
    </source>
</reference>
<proteinExistence type="inferred from homology"/>
<evidence type="ECO:0000255" key="1">
    <source>
        <dbReference type="HAMAP-Rule" id="MF_01369"/>
    </source>
</evidence>
<evidence type="ECO:0000305" key="2"/>
<comment type="function">
    <text evidence="1">One of the early assembly proteins it binds 23S rRNA. One of the proteins that surrounds the polypeptide exit tunnel on the outside of the ribosome. Forms the main docking site for trigger factor binding to the ribosome.</text>
</comment>
<comment type="subunit">
    <text evidence="1">Part of the 50S ribosomal subunit. Contacts protein L29, and trigger factor when it is bound to the ribosome.</text>
</comment>
<comment type="similarity">
    <text evidence="1">Belongs to the universal ribosomal protein uL23 family.</text>
</comment>
<gene>
    <name evidence="1" type="primary">rplW</name>
    <name type="ordered locus">YE3921</name>
</gene>
<name>RL23_YERE8</name>
<accession>A1JS44</accession>
<accession>P41278</accession>
<organism>
    <name type="scientific">Yersinia enterocolitica serotype O:8 / biotype 1B (strain NCTC 13174 / 8081)</name>
    <dbReference type="NCBI Taxonomy" id="393305"/>
    <lineage>
        <taxon>Bacteria</taxon>
        <taxon>Pseudomonadati</taxon>
        <taxon>Pseudomonadota</taxon>
        <taxon>Gammaproteobacteria</taxon>
        <taxon>Enterobacterales</taxon>
        <taxon>Yersiniaceae</taxon>
        <taxon>Yersinia</taxon>
    </lineage>
</organism>
<sequence>MIREERLLKVLRAPHVSEKASAAMEKNNTIVLKVAKDATKAEIKAAVQKLFEVEVEDVNTLLVKGKSKRHGQRVGRRSDWKKAYVTLKEGQNLDFIGGAE</sequence>
<keyword id="KW-0687">Ribonucleoprotein</keyword>
<keyword id="KW-0689">Ribosomal protein</keyword>
<keyword id="KW-0694">RNA-binding</keyword>
<keyword id="KW-0699">rRNA-binding</keyword>
<feature type="chain" id="PRO_0000281775" description="Large ribosomal subunit protein uL23">
    <location>
        <begin position="1"/>
        <end position="100"/>
    </location>
</feature>